<accession>P0C176</accession>
<accession>A0A7S8RGA4</accession>
<comment type="function">
    <text evidence="2">Probable weak potassium channel blocker.</text>
</comment>
<comment type="subcellular location">
    <subcellularLocation>
        <location evidence="4">Secreted</location>
    </subcellularLocation>
</comment>
<comment type="tissue specificity">
    <text evidence="7">Expressed by the venom gland.</text>
</comment>
<comment type="domain">
    <text evidence="1">The presence of a 'disulfide through disulfide knot' structurally defines this protein as a knottin.</text>
</comment>
<comment type="domain">
    <text evidence="1">Is completely devoid of the classical secondary structure elements (alpha-helix and/or beta-strand).</text>
</comment>
<comment type="mass spectrometry" mass="3019.62" method="MALDI" evidence="4"/>
<comment type="similarity">
    <text evidence="7">Belongs to the short scorpion toxin superfamily. Potassium channel inhibitor family. Epsilon-KTx 01 subfamily.</text>
</comment>
<feature type="signal peptide" evidence="3">
    <location>
        <begin position="1"/>
        <end position="26"/>
    </location>
</feature>
<feature type="peptide" id="PRO_0000227822" description="Peptide TsPep3" evidence="4">
    <location>
        <begin position="27"/>
        <end position="55"/>
    </location>
</feature>
<feature type="propeptide" id="PRO_0000455732" evidence="8">
    <location>
        <begin position="56"/>
        <end position="68"/>
    </location>
</feature>
<feature type="disulfide bond" evidence="1">
    <location>
        <begin position="30"/>
        <end position="38"/>
    </location>
</feature>
<feature type="disulfide bond" evidence="1">
    <location>
        <begin position="33"/>
        <end position="54"/>
    </location>
</feature>
<feature type="disulfide bond" evidence="1">
    <location>
        <begin position="37"/>
        <end position="47"/>
    </location>
</feature>
<feature type="disulfide bond" evidence="1">
    <location>
        <begin position="42"/>
        <end position="52"/>
    </location>
</feature>
<sequence length="68" mass="7427">MKLSCGFLLIFLVLSAMIATFSEVEATVKCGGCNRKCCPGGCRSGKCINGKCQCYGRSDLNEEFENYQ</sequence>
<protein>
    <recommendedName>
        <fullName evidence="5">Peptide TsPep3</fullName>
    </recommendedName>
    <alternativeName>
        <fullName evidence="7">Tityustoxin-13</fullName>
        <shortName evidence="6">Ts13</shortName>
    </alternativeName>
</protein>
<organism>
    <name type="scientific">Tityus serrulatus</name>
    <name type="common">Brazilian scorpion</name>
    <dbReference type="NCBI Taxonomy" id="6887"/>
    <lineage>
        <taxon>Eukaryota</taxon>
        <taxon>Metazoa</taxon>
        <taxon>Ecdysozoa</taxon>
        <taxon>Arthropoda</taxon>
        <taxon>Chelicerata</taxon>
        <taxon>Arachnida</taxon>
        <taxon>Scorpiones</taxon>
        <taxon>Buthida</taxon>
        <taxon>Buthoidea</taxon>
        <taxon>Buthidae</taxon>
        <taxon>Tityus</taxon>
    </lineage>
</organism>
<proteinExistence type="evidence at protein level"/>
<name>KEX1S_TITSE</name>
<reference evidence="9" key="1">
    <citation type="journal article" date="2021" name="Toxicon">
        <title>Novel components of Tityus serrulatus venom: a transcriptomic approach.</title>
        <authorList>
            <person name="Kalapothakis Y."/>
            <person name="Miranda K."/>
            <person name="Pereira A.H."/>
            <person name="Witt A.S.A."/>
            <person name="Marani C."/>
            <person name="Martins A.P."/>
            <person name="Leal H.G."/>
            <person name="Campos-Junior E."/>
            <person name="Pimenta A.M.C."/>
            <person name="Borges A."/>
            <person name="Chavez-Olortegui C."/>
            <person name="Kalapothakis E."/>
        </authorList>
    </citation>
    <scope>NUCLEOTIDE SEQUENCE [MRNA]</scope>
    <source>
        <tissue>Telson</tissue>
    </source>
</reference>
<reference key="2">
    <citation type="journal article" date="2003" name="Biochem. Biophys. Res. Commun.">
        <title>Novel structural class of four disulfide-bridged peptides from Tityus serrulatus venom.</title>
        <authorList>
            <person name="Pimenta A.M.C."/>
            <person name="Legros C."/>
            <person name="Almeida F.M."/>
            <person name="Mansuelle P."/>
            <person name="De Lima M.E."/>
            <person name="Bougis P.E."/>
            <person name="Martin-Eauclaire M.-F."/>
        </authorList>
    </citation>
    <scope>PROTEIN SEQUENCE OF 27-55</scope>
    <scope>MASS SPECTROMETRY</scope>
    <scope>SUBCELLULAR LOCATION</scope>
    <source>
        <tissue>Venom</tissue>
    </source>
</reference>
<reference key="3">
    <citation type="journal article" date="2009" name="Protein Pept. Lett.">
        <title>Tityus serrulatus scorpion venom and toxins: an overview.</title>
        <authorList>
            <person name="Cologna C.T."/>
            <person name="Marcussi S."/>
            <person name="Giglio J.R."/>
            <person name="Soares A.M."/>
            <person name="Arantes E.C."/>
        </authorList>
    </citation>
    <scope>NOMENCLATURE</scope>
</reference>
<evidence type="ECO:0000250" key="1">
    <source>
        <dbReference type="UniProtKB" id="P0C174"/>
    </source>
</evidence>
<evidence type="ECO:0000250" key="2">
    <source>
        <dbReference type="UniProtKB" id="P0C175"/>
    </source>
</evidence>
<evidence type="ECO:0000255" key="3"/>
<evidence type="ECO:0000269" key="4">
    <source>
    </source>
</evidence>
<evidence type="ECO:0000303" key="5">
    <source>
    </source>
</evidence>
<evidence type="ECO:0000303" key="6">
    <source>
    </source>
</evidence>
<evidence type="ECO:0000305" key="7"/>
<evidence type="ECO:0000305" key="8">
    <source>
    </source>
</evidence>
<evidence type="ECO:0000312" key="9">
    <source>
        <dbReference type="EMBL" id="QPD99019.2"/>
    </source>
</evidence>
<keyword id="KW-0903">Direct protein sequencing</keyword>
<keyword id="KW-1015">Disulfide bond</keyword>
<keyword id="KW-0872">Ion channel impairing toxin</keyword>
<keyword id="KW-0960">Knottin</keyword>
<keyword id="KW-0528">Neurotoxin</keyword>
<keyword id="KW-0632">Potassium channel impairing toxin</keyword>
<keyword id="KW-0964">Secreted</keyword>
<keyword id="KW-0732">Signal</keyword>
<keyword id="KW-0800">Toxin</keyword>
<keyword id="KW-1220">Voltage-gated potassium channel impairing toxin</keyword>
<dbReference type="EMBL" id="MT081337">
    <property type="protein sequence ID" value="QPD99019.2"/>
    <property type="molecule type" value="mRNA"/>
</dbReference>
<dbReference type="SMR" id="P0C176"/>
<dbReference type="GO" id="GO:0005576">
    <property type="term" value="C:extracellular region"/>
    <property type="evidence" value="ECO:0007669"/>
    <property type="project" value="UniProtKB-SubCell"/>
</dbReference>
<dbReference type="GO" id="GO:0015459">
    <property type="term" value="F:potassium channel regulator activity"/>
    <property type="evidence" value="ECO:0007669"/>
    <property type="project" value="UniProtKB-KW"/>
</dbReference>
<dbReference type="GO" id="GO:0090729">
    <property type="term" value="F:toxin activity"/>
    <property type="evidence" value="ECO:0007669"/>
    <property type="project" value="UniProtKB-KW"/>
</dbReference>
<dbReference type="InterPro" id="IPR036574">
    <property type="entry name" value="Scorpion_toxin-like_sf"/>
</dbReference>
<dbReference type="SUPFAM" id="SSF57095">
    <property type="entry name" value="Scorpion toxin-like"/>
    <property type="match status" value="1"/>
</dbReference>
<dbReference type="PROSITE" id="PS01138">
    <property type="entry name" value="SCORP_SHORT_TOXIN"/>
    <property type="match status" value="1"/>
</dbReference>